<organism>
    <name type="scientific">Rattus norvegicus</name>
    <name type="common">Rat</name>
    <dbReference type="NCBI Taxonomy" id="10116"/>
    <lineage>
        <taxon>Eukaryota</taxon>
        <taxon>Metazoa</taxon>
        <taxon>Chordata</taxon>
        <taxon>Craniata</taxon>
        <taxon>Vertebrata</taxon>
        <taxon>Euteleostomi</taxon>
        <taxon>Mammalia</taxon>
        <taxon>Eutheria</taxon>
        <taxon>Euarchontoglires</taxon>
        <taxon>Glires</taxon>
        <taxon>Rodentia</taxon>
        <taxon>Myomorpha</taxon>
        <taxon>Muroidea</taxon>
        <taxon>Muridae</taxon>
        <taxon>Murinae</taxon>
        <taxon>Rattus</taxon>
    </lineage>
</organism>
<keyword id="KW-0007">Acetylation</keyword>
<keyword id="KW-0903">Direct protein sequencing</keyword>
<keyword id="KW-0238">DNA-binding</keyword>
<keyword id="KW-0509">mRNA transport</keyword>
<keyword id="KW-0539">Nucleus</keyword>
<keyword id="KW-0597">Phosphoprotein</keyword>
<keyword id="KW-1185">Reference proteome</keyword>
<keyword id="KW-0694">RNA-binding</keyword>
<keyword id="KW-0804">Transcription</keyword>
<keyword id="KW-0805">Transcription regulation</keyword>
<keyword id="KW-0810">Translation regulation</keyword>
<keyword id="KW-0813">Transport</keyword>
<feature type="initiator methionine" description="Removed" evidence="6">
    <location>
        <position position="1"/>
    </location>
</feature>
<feature type="chain" id="PRO_0000083918" description="SAP domain-containing ribonucleoprotein">
    <location>
        <begin position="2"/>
        <end position="210"/>
    </location>
</feature>
<feature type="domain" description="SAP" evidence="4">
    <location>
        <begin position="8"/>
        <end position="42"/>
    </location>
</feature>
<feature type="region of interest" description="Disordered" evidence="5">
    <location>
        <begin position="45"/>
        <end position="87"/>
    </location>
</feature>
<feature type="region of interest" description="Disordered" evidence="5">
    <location>
        <begin position="161"/>
        <end position="210"/>
    </location>
</feature>
<feature type="compositionally biased region" description="Acidic residues" evidence="5">
    <location>
        <begin position="45"/>
        <end position="64"/>
    </location>
</feature>
<feature type="compositionally biased region" description="Basic and acidic residues" evidence="5">
    <location>
        <begin position="65"/>
        <end position="87"/>
    </location>
</feature>
<feature type="compositionally biased region" description="Polar residues" evidence="5">
    <location>
        <begin position="184"/>
        <end position="193"/>
    </location>
</feature>
<feature type="modified residue" description="N-acetylalanine" evidence="6">
    <location>
        <position position="2"/>
    </location>
</feature>
<feature type="modified residue" description="N6-acetyllysine" evidence="3">
    <location>
        <position position="10"/>
    </location>
</feature>
<feature type="modified residue" description="N6-acetyllysine" evidence="3">
    <location>
        <position position="142"/>
    </location>
</feature>
<feature type="modified residue" description="Phosphoserine" evidence="3">
    <location>
        <position position="163"/>
    </location>
</feature>
<sequence>MATETVELHKLKLAELKQECLARGLETKGIKQDLINRLQAYLEEHAEEEANEEDVLGDETEEEEPKPIELPVKEEEPPEKVVDMASEKKVVKITSGIPQTERMQKRAERFNVPVSLESKKAARAARFGISSVPTKGLSSDTKPMVNLDKLKERAQRFGLNVSSISRKSEDDEKLKKRKERFGIVTSSAGTGTTEDTEAKKRKRAERFGIA</sequence>
<evidence type="ECO:0000250" key="1"/>
<evidence type="ECO:0000250" key="2">
    <source>
        <dbReference type="UniProtKB" id="P82979"/>
    </source>
</evidence>
<evidence type="ECO:0000250" key="3">
    <source>
        <dbReference type="UniProtKB" id="Q9D1J3"/>
    </source>
</evidence>
<evidence type="ECO:0000255" key="4">
    <source>
        <dbReference type="PROSITE-ProRule" id="PRU00186"/>
    </source>
</evidence>
<evidence type="ECO:0000256" key="5">
    <source>
        <dbReference type="SAM" id="MobiDB-lite"/>
    </source>
</evidence>
<evidence type="ECO:0000269" key="6">
    <source ref="3"/>
</evidence>
<evidence type="ECO:0000305" key="7"/>
<reference key="1">
    <citation type="journal article" date="2004" name="Genome Res.">
        <title>The status, quality, and expansion of the NIH full-length cDNA project: the Mammalian Gene Collection (MGC).</title>
        <authorList>
            <consortium name="The MGC Project Team"/>
        </authorList>
    </citation>
    <scope>NUCLEOTIDE SEQUENCE [LARGE SCALE MRNA]</scope>
    <source>
        <tissue>Thymus</tissue>
    </source>
</reference>
<reference key="2">
    <citation type="submission" date="2007-04" db="UniProtKB">
        <authorList>
            <person name="Lubec G."/>
            <person name="Chen W.-Q."/>
        </authorList>
    </citation>
    <scope>PROTEIN SEQUENCE OF 93-102; 110-119; 127-149 AND 157-166</scope>
    <scope>IDENTIFICATION BY MASS SPECTROMETRY</scope>
    <source>
        <strain>Sprague-Dawley</strain>
        <tissue>Hippocampus</tissue>
    </source>
</reference>
<reference key="3">
    <citation type="submission" date="2007-02" db="UniProtKB">
        <authorList>
            <person name="Lubec G."/>
            <person name="Chen W.-Q."/>
        </authorList>
    </citation>
    <scope>ACETYLATION AT ALA-2</scope>
    <scope>IDENTIFICATION BY MASS SPECTROMETRY</scope>
</reference>
<accession>Q498U4</accession>
<dbReference type="EMBL" id="BC100070">
    <property type="protein sequence ID" value="AAI00071.1"/>
    <property type="molecule type" value="mRNA"/>
</dbReference>
<dbReference type="RefSeq" id="NP_001028242.1">
    <property type="nucleotide sequence ID" value="NM_001033070.1"/>
</dbReference>
<dbReference type="SMR" id="Q498U4"/>
<dbReference type="FunCoup" id="Q498U4">
    <property type="interactions" value="3207"/>
</dbReference>
<dbReference type="IntAct" id="Q498U4">
    <property type="interactions" value="7"/>
</dbReference>
<dbReference type="STRING" id="10116.ENSRNOP00000009155"/>
<dbReference type="iPTMnet" id="Q498U4"/>
<dbReference type="PhosphoSitePlus" id="Q498U4"/>
<dbReference type="jPOST" id="Q498U4"/>
<dbReference type="PaxDb" id="10116-ENSRNOP00000009155"/>
<dbReference type="Ensembl" id="ENSRNOT00000009155.6">
    <property type="protein sequence ID" value="ENSRNOP00000009155.5"/>
    <property type="gene ID" value="ENSRNOG00000030520.4"/>
</dbReference>
<dbReference type="GeneID" id="362819"/>
<dbReference type="KEGG" id="rno:362819"/>
<dbReference type="UCSC" id="RGD:1305692">
    <property type="organism name" value="rat"/>
</dbReference>
<dbReference type="AGR" id="RGD:1305692"/>
<dbReference type="CTD" id="84324"/>
<dbReference type="RGD" id="1305692">
    <property type="gene designation" value="Sarnp"/>
</dbReference>
<dbReference type="eggNOG" id="KOG0720">
    <property type="taxonomic scope" value="Eukaryota"/>
</dbReference>
<dbReference type="eggNOG" id="KOG4259">
    <property type="taxonomic scope" value="Eukaryota"/>
</dbReference>
<dbReference type="GeneTree" id="ENSGT00390000002944"/>
<dbReference type="HOGENOM" id="CLU_073926_1_0_1"/>
<dbReference type="InParanoid" id="Q498U4"/>
<dbReference type="OrthoDB" id="86454at9989"/>
<dbReference type="PhylomeDB" id="Q498U4"/>
<dbReference type="TreeFam" id="TF319843"/>
<dbReference type="Reactome" id="R-RNO-159236">
    <property type="pathway name" value="Transport of Mature mRNA derived from an Intron-Containing Transcript"/>
</dbReference>
<dbReference type="Reactome" id="R-RNO-72187">
    <property type="pathway name" value="mRNA 3'-end processing"/>
</dbReference>
<dbReference type="Reactome" id="R-RNO-73856">
    <property type="pathway name" value="RNA Polymerase II Transcription Termination"/>
</dbReference>
<dbReference type="PRO" id="PR:Q498U4"/>
<dbReference type="Proteomes" id="UP000002494">
    <property type="component" value="Chromosome 7"/>
</dbReference>
<dbReference type="Bgee" id="ENSRNOG00000030520">
    <property type="expression patterns" value="Expressed in thymus and 20 other cell types or tissues"/>
</dbReference>
<dbReference type="GO" id="GO:0036464">
    <property type="term" value="C:cytoplasmic ribonucleoprotein granule"/>
    <property type="evidence" value="ECO:0007669"/>
    <property type="project" value="Ensembl"/>
</dbReference>
<dbReference type="GO" id="GO:0016607">
    <property type="term" value="C:nuclear speck"/>
    <property type="evidence" value="ECO:0000250"/>
    <property type="project" value="UniProtKB"/>
</dbReference>
<dbReference type="GO" id="GO:0005634">
    <property type="term" value="C:nucleus"/>
    <property type="evidence" value="ECO:0000266"/>
    <property type="project" value="RGD"/>
</dbReference>
<dbReference type="GO" id="GO:0000346">
    <property type="term" value="C:transcription export complex"/>
    <property type="evidence" value="ECO:0000250"/>
    <property type="project" value="UniProtKB"/>
</dbReference>
<dbReference type="GO" id="GO:0003682">
    <property type="term" value="F:chromatin binding"/>
    <property type="evidence" value="ECO:0000266"/>
    <property type="project" value="RGD"/>
</dbReference>
<dbReference type="GO" id="GO:0003677">
    <property type="term" value="F:DNA binding"/>
    <property type="evidence" value="ECO:0007669"/>
    <property type="project" value="UniProtKB-KW"/>
</dbReference>
<dbReference type="GO" id="GO:0003723">
    <property type="term" value="F:RNA binding"/>
    <property type="evidence" value="ECO:0007669"/>
    <property type="project" value="UniProtKB-KW"/>
</dbReference>
<dbReference type="GO" id="GO:0006406">
    <property type="term" value="P:mRNA export from nucleus"/>
    <property type="evidence" value="ECO:0000250"/>
    <property type="project" value="UniProtKB"/>
</dbReference>
<dbReference type="GO" id="GO:0000122">
    <property type="term" value="P:negative regulation of transcription by RNA polymerase II"/>
    <property type="evidence" value="ECO:0000266"/>
    <property type="project" value="RGD"/>
</dbReference>
<dbReference type="GO" id="GO:0016973">
    <property type="term" value="P:poly(A)+ mRNA export from nucleus"/>
    <property type="evidence" value="ECO:0000318"/>
    <property type="project" value="GO_Central"/>
</dbReference>
<dbReference type="GO" id="GO:0006417">
    <property type="term" value="P:regulation of translation"/>
    <property type="evidence" value="ECO:0007669"/>
    <property type="project" value="UniProtKB-KW"/>
</dbReference>
<dbReference type="FunFam" id="1.10.720.30:FF:000013">
    <property type="entry name" value="SAP domain-containing ribonucleoprotein"/>
    <property type="match status" value="1"/>
</dbReference>
<dbReference type="Gene3D" id="1.10.720.30">
    <property type="entry name" value="SAP domain"/>
    <property type="match status" value="1"/>
</dbReference>
<dbReference type="InterPro" id="IPR003034">
    <property type="entry name" value="SAP_dom"/>
</dbReference>
<dbReference type="InterPro" id="IPR036361">
    <property type="entry name" value="SAP_dom_sf"/>
</dbReference>
<dbReference type="InterPro" id="IPR052240">
    <property type="entry name" value="SAP_domain_ribonucleoprotein"/>
</dbReference>
<dbReference type="PANTHER" id="PTHR46551">
    <property type="entry name" value="SAP DOMAIN-CONTAINING RIBONUCLEOPROTEIN"/>
    <property type="match status" value="1"/>
</dbReference>
<dbReference type="PANTHER" id="PTHR46551:SF1">
    <property type="entry name" value="SAP DOMAIN-CONTAINING RIBONUCLEOPROTEIN"/>
    <property type="match status" value="1"/>
</dbReference>
<dbReference type="Pfam" id="PF02037">
    <property type="entry name" value="SAP"/>
    <property type="match status" value="1"/>
</dbReference>
<dbReference type="SMART" id="SM00513">
    <property type="entry name" value="SAP"/>
    <property type="match status" value="1"/>
</dbReference>
<dbReference type="SUPFAM" id="SSF68906">
    <property type="entry name" value="SAP domain"/>
    <property type="match status" value="1"/>
</dbReference>
<dbReference type="PROSITE" id="PS50800">
    <property type="entry name" value="SAP"/>
    <property type="match status" value="1"/>
</dbReference>
<comment type="function">
    <text evidence="2">Binds both single-stranded and double-stranded DNA with higher affinity for the single-stranded form. Specifically binds to scaffold/matrix attachment region DNA. Also binds single-stranded RNA. Enhances RNA unwinding activity of DDX39A. May participate in important transcriptional or translational control of cell growth, metabolism and carcinogenesis. Component of the TREX complex which is thought to couple mRNA transcription, processing and nuclear export, and specifically associates with spliced mRNA and not with unspliced pre-mRNA. The TREX complex is recruited to spliced mRNAs by a transcription-independent mechanism, binds to mRNA upstream of the exon-junction complex (EJC) and is recruited in a splicing- and cap-dependent manner to a region near the 5' end of the mRNA where it functions in mRNA export to the cytoplasm via the TAP/NXF1 pathway. Associates with DDX39B, which facilitates RNA binding of DDX39B and likely plays a role in mRNA export.</text>
</comment>
<comment type="subunit">
    <text evidence="2">Interacts with DDX39A. Interacts with FUS. Interacts (via the C-terminal domain) with DDX39B; the interaction is direct and facilitates RNA binding of DDX39B. Component of the transcription/export (TREX) complex at least composed of ALYREF/THOC4, DDX39B, SARNP/CIP29, CHTOP and the THO subcomplex; TREX seems to have dynamic structure involving ATP-dependent remodeling; in the complex interacts directly with DDX39B in a ATP-dependent manner which bridges it to ALYREF/THOC4.</text>
</comment>
<comment type="subcellular location">
    <subcellularLocation>
        <location evidence="1">Nucleus</location>
    </subcellularLocation>
    <subcellularLocation>
        <location evidence="1">Nucleus speckle</location>
    </subcellularLocation>
</comment>
<comment type="similarity">
    <text evidence="7">Belongs to the SAP domain-containing ribonucleoprotein family.</text>
</comment>
<proteinExistence type="evidence at protein level"/>
<protein>
    <recommendedName>
        <fullName>SAP domain-containing ribonucleoprotein</fullName>
    </recommendedName>
    <alternativeName>
        <fullName>Nuclear protein Hcc-1</fullName>
    </alternativeName>
</protein>
<gene>
    <name type="primary">Sarnp</name>
    <name type="synonym">Hcc1</name>
</gene>
<name>SARNP_RAT</name>